<reference key="1">
    <citation type="journal article" date="2008" name="PLoS Genet.">
        <title>Genomic islands in the pathogenic filamentous fungus Aspergillus fumigatus.</title>
        <authorList>
            <person name="Fedorova N.D."/>
            <person name="Khaldi N."/>
            <person name="Joardar V.S."/>
            <person name="Maiti R."/>
            <person name="Amedeo P."/>
            <person name="Anderson M.J."/>
            <person name="Crabtree J."/>
            <person name="Silva J.C."/>
            <person name="Badger J.H."/>
            <person name="Albarraq A."/>
            <person name="Angiuoli S."/>
            <person name="Bussey H."/>
            <person name="Bowyer P."/>
            <person name="Cotty P.J."/>
            <person name="Dyer P.S."/>
            <person name="Egan A."/>
            <person name="Galens K."/>
            <person name="Fraser-Liggett C.M."/>
            <person name="Haas B.J."/>
            <person name="Inman J.M."/>
            <person name="Kent R."/>
            <person name="Lemieux S."/>
            <person name="Malavazi I."/>
            <person name="Orvis J."/>
            <person name="Roemer T."/>
            <person name="Ronning C.M."/>
            <person name="Sundaram J.P."/>
            <person name="Sutton G."/>
            <person name="Turner G."/>
            <person name="Venter J.C."/>
            <person name="White O.R."/>
            <person name="Whitty B.R."/>
            <person name="Youngman P."/>
            <person name="Wolfe K.H."/>
            <person name="Goldman G.H."/>
            <person name="Wortman J.R."/>
            <person name="Jiang B."/>
            <person name="Denning D.W."/>
            <person name="Nierman W.C."/>
        </authorList>
    </citation>
    <scope>NUCLEOTIDE SEQUENCE [LARGE SCALE GENOMIC DNA]</scope>
    <source>
        <strain>ATCC 1020 / DSM 3700 / CBS 544.65 / FGSC A1164 / JCM 1740 / NRRL 181 / WB 181</strain>
    </source>
</reference>
<accession>A1D2R0</accession>
<organism>
    <name type="scientific">Neosartorya fischeri (strain ATCC 1020 / DSM 3700 / CBS 544.65 / FGSC A1164 / JCM 1740 / NRRL 181 / WB 181)</name>
    <name type="common">Aspergillus fischerianus</name>
    <dbReference type="NCBI Taxonomy" id="331117"/>
    <lineage>
        <taxon>Eukaryota</taxon>
        <taxon>Fungi</taxon>
        <taxon>Dikarya</taxon>
        <taxon>Ascomycota</taxon>
        <taxon>Pezizomycotina</taxon>
        <taxon>Eurotiomycetes</taxon>
        <taxon>Eurotiomycetidae</taxon>
        <taxon>Eurotiales</taxon>
        <taxon>Aspergillaceae</taxon>
        <taxon>Aspergillus</taxon>
        <taxon>Aspergillus subgen. Fumigati</taxon>
    </lineage>
</organism>
<gene>
    <name evidence="1" type="primary">qutE1</name>
    <name type="ORF">NFIA_013930</name>
</gene>
<comment type="function">
    <text evidence="1">Is involved in the catabolism of quinate. Allows the utilization of quinate as carbon source via the beta-ketoadipate pathway.</text>
</comment>
<comment type="catalytic activity">
    <reaction evidence="1">
        <text>3-dehydroquinate = 3-dehydroshikimate + H2O</text>
        <dbReference type="Rhea" id="RHEA:21096"/>
        <dbReference type="ChEBI" id="CHEBI:15377"/>
        <dbReference type="ChEBI" id="CHEBI:16630"/>
        <dbReference type="ChEBI" id="CHEBI:32364"/>
        <dbReference type="EC" id="4.2.1.10"/>
    </reaction>
</comment>
<comment type="pathway">
    <text evidence="1">Aromatic compound metabolism; 3,4-dihydroxybenzoate biosynthesis; 3,4-dihydroxybenzoate from 3-dehydroquinate: step 1/2.</text>
</comment>
<comment type="subunit">
    <text evidence="1">Homododecamer. Adopts a ring-like structure, composed of an arrangement of two hexameric rings stacked on top of one another.</text>
</comment>
<comment type="similarity">
    <text evidence="1">Belongs to the type-II 3-dehydroquinase family.</text>
</comment>
<sequence length="150" mass="16034">MGKSILLINGPNLNLLGTREPQIYGSTTLADVEASCKAHAESLGATLATFQSNHEGAIIDRIQAARGNVDGIVINPGAFTHTSVAIRDALLGVGIPFIELHVSNVHAREPWRHHSYFSDKAAGIIVGLGVYGYKVAVEHVALNFKERAIL</sequence>
<proteinExistence type="inferred from homology"/>
<dbReference type="EC" id="4.2.1.10" evidence="1"/>
<dbReference type="EMBL" id="DS027688">
    <property type="protein sequence ID" value="EAW22703.1"/>
    <property type="molecule type" value="Genomic_DNA"/>
</dbReference>
<dbReference type="RefSeq" id="XP_001264600.1">
    <property type="nucleotide sequence ID" value="XM_001264599.1"/>
</dbReference>
<dbReference type="SMR" id="A1D2R0"/>
<dbReference type="STRING" id="331117.A1D2R0"/>
<dbReference type="EnsemblFungi" id="EAW22703">
    <property type="protein sequence ID" value="EAW22703"/>
    <property type="gene ID" value="NFIA_013930"/>
</dbReference>
<dbReference type="GeneID" id="4591694"/>
<dbReference type="KEGG" id="nfi:NFIA_013930"/>
<dbReference type="VEuPathDB" id="FungiDB:NFIA_013930"/>
<dbReference type="eggNOG" id="ENOG502S1A9">
    <property type="taxonomic scope" value="Eukaryota"/>
</dbReference>
<dbReference type="HOGENOM" id="CLU_090968_1_0_1"/>
<dbReference type="OMA" id="AYTHYSY"/>
<dbReference type="OrthoDB" id="8191625at2759"/>
<dbReference type="UniPathway" id="UPA00088">
    <property type="reaction ID" value="UER00178"/>
</dbReference>
<dbReference type="Proteomes" id="UP000006702">
    <property type="component" value="Unassembled WGS sequence"/>
</dbReference>
<dbReference type="GO" id="GO:0003855">
    <property type="term" value="F:3-dehydroquinate dehydratase activity"/>
    <property type="evidence" value="ECO:0007669"/>
    <property type="project" value="UniProtKB-UniRule"/>
</dbReference>
<dbReference type="GO" id="GO:0046279">
    <property type="term" value="P:3,4-dihydroxybenzoate biosynthetic process"/>
    <property type="evidence" value="ECO:0007669"/>
    <property type="project" value="UniProtKB-UniRule"/>
</dbReference>
<dbReference type="GO" id="GO:0019631">
    <property type="term" value="P:quinate catabolic process"/>
    <property type="evidence" value="ECO:0007669"/>
    <property type="project" value="TreeGrafter"/>
</dbReference>
<dbReference type="CDD" id="cd00466">
    <property type="entry name" value="DHQase_II"/>
    <property type="match status" value="1"/>
</dbReference>
<dbReference type="Gene3D" id="3.40.50.9100">
    <property type="entry name" value="Dehydroquinase, class II"/>
    <property type="match status" value="1"/>
</dbReference>
<dbReference type="HAMAP" id="MF_00169">
    <property type="entry name" value="AroQ"/>
    <property type="match status" value="1"/>
</dbReference>
<dbReference type="InterPro" id="IPR001874">
    <property type="entry name" value="DHquinase_II"/>
</dbReference>
<dbReference type="InterPro" id="IPR018509">
    <property type="entry name" value="DHquinase_II_CS"/>
</dbReference>
<dbReference type="InterPro" id="IPR036441">
    <property type="entry name" value="DHquinase_II_sf"/>
</dbReference>
<dbReference type="NCBIfam" id="TIGR01088">
    <property type="entry name" value="aroQ"/>
    <property type="match status" value="1"/>
</dbReference>
<dbReference type="NCBIfam" id="NF003804">
    <property type="entry name" value="PRK05395.1-1"/>
    <property type="match status" value="1"/>
</dbReference>
<dbReference type="NCBIfam" id="NF003805">
    <property type="entry name" value="PRK05395.1-2"/>
    <property type="match status" value="1"/>
</dbReference>
<dbReference type="NCBIfam" id="NF003806">
    <property type="entry name" value="PRK05395.1-3"/>
    <property type="match status" value="1"/>
</dbReference>
<dbReference type="NCBIfam" id="NF003807">
    <property type="entry name" value="PRK05395.1-4"/>
    <property type="match status" value="1"/>
</dbReference>
<dbReference type="PANTHER" id="PTHR21272">
    <property type="entry name" value="CATABOLIC 3-DEHYDROQUINASE"/>
    <property type="match status" value="1"/>
</dbReference>
<dbReference type="PANTHER" id="PTHR21272:SF5">
    <property type="entry name" value="CATABOLIC 3-DEHYDROQUINASE"/>
    <property type="match status" value="1"/>
</dbReference>
<dbReference type="Pfam" id="PF01220">
    <property type="entry name" value="DHquinase_II"/>
    <property type="match status" value="1"/>
</dbReference>
<dbReference type="PIRSF" id="PIRSF001399">
    <property type="entry name" value="DHquinase_II"/>
    <property type="match status" value="1"/>
</dbReference>
<dbReference type="SUPFAM" id="SSF52304">
    <property type="entry name" value="Type II 3-dehydroquinate dehydratase"/>
    <property type="match status" value="1"/>
</dbReference>
<dbReference type="PROSITE" id="PS01029">
    <property type="entry name" value="DEHYDROQUINASE_II"/>
    <property type="match status" value="1"/>
</dbReference>
<protein>
    <recommendedName>
        <fullName evidence="1">Catabolic 3-dehydroquinase 1</fullName>
        <shortName evidence="1">cDHQase 1</shortName>
        <ecNumber evidence="1">4.2.1.10</ecNumber>
    </recommendedName>
    <alternativeName>
        <fullName evidence="1">3-dehydroquinate dehydratase 1</fullName>
    </alternativeName>
</protein>
<feature type="chain" id="PRO_0000402369" description="Catabolic 3-dehydroquinase 1">
    <location>
        <begin position="1"/>
        <end position="150"/>
    </location>
</feature>
<feature type="active site" description="Proton acceptor" evidence="1">
    <location>
        <position position="24"/>
    </location>
</feature>
<feature type="active site" description="Proton donor" evidence="1">
    <location>
        <position position="101"/>
    </location>
</feature>
<feature type="binding site" evidence="1">
    <location>
        <position position="75"/>
    </location>
    <ligand>
        <name>substrate</name>
    </ligand>
</feature>
<feature type="binding site" evidence="1">
    <location>
        <position position="81"/>
    </location>
    <ligand>
        <name>substrate</name>
    </ligand>
</feature>
<feature type="binding site" evidence="1">
    <location>
        <position position="88"/>
    </location>
    <ligand>
        <name>substrate</name>
    </ligand>
</feature>
<feature type="binding site" evidence="1">
    <location>
        <begin position="102"/>
        <end position="103"/>
    </location>
    <ligand>
        <name>substrate</name>
    </ligand>
</feature>
<feature type="binding site" evidence="1">
    <location>
        <position position="112"/>
    </location>
    <ligand>
        <name>substrate</name>
    </ligand>
</feature>
<feature type="site" description="Transition state stabilizer" evidence="1">
    <location>
        <position position="19"/>
    </location>
</feature>
<name>3DHQ1_NEOFI</name>
<keyword id="KW-0456">Lyase</keyword>
<keyword id="KW-0672">Quinate metabolism</keyword>
<keyword id="KW-1185">Reference proteome</keyword>
<evidence type="ECO:0000255" key="1">
    <source>
        <dbReference type="HAMAP-Rule" id="MF_03136"/>
    </source>
</evidence>